<evidence type="ECO:0000255" key="1">
    <source>
        <dbReference type="HAMAP-Rule" id="MF_00146"/>
    </source>
</evidence>
<accession>B0KUD5</accession>
<protein>
    <recommendedName>
        <fullName evidence="1">dCTP deaminase</fullName>
        <ecNumber evidence="1">3.5.4.13</ecNumber>
    </recommendedName>
    <alternativeName>
        <fullName evidence="1">Deoxycytidine triphosphate deaminase</fullName>
    </alternativeName>
</protein>
<gene>
    <name evidence="1" type="primary">dcd</name>
    <name type="ordered locus">PputGB1_4312</name>
</gene>
<sequence length="188" mass="21206">MSIKSDKWIRRMAQEHGMIEPFVERQVRGEQDSRVISFGVSSYGYDVRCADEFKVFTNINSATVDPKNFDAGSFVDIKSDVCIIPPNSFALARTVEYFRIPRDVLTICLGKSTYARCGIIVNVTPLEPEWEGHVTLEFSNTTTLPAKIYANEGVAQMLFLQSDEECEVSYKDRGGKYQGQRGVTLPRT</sequence>
<comment type="function">
    <text evidence="1">Catalyzes the deamination of dCTP to dUTP.</text>
</comment>
<comment type="catalytic activity">
    <reaction evidence="1">
        <text>dCTP + H2O + H(+) = dUTP + NH4(+)</text>
        <dbReference type="Rhea" id="RHEA:22680"/>
        <dbReference type="ChEBI" id="CHEBI:15377"/>
        <dbReference type="ChEBI" id="CHEBI:15378"/>
        <dbReference type="ChEBI" id="CHEBI:28938"/>
        <dbReference type="ChEBI" id="CHEBI:61481"/>
        <dbReference type="ChEBI" id="CHEBI:61555"/>
        <dbReference type="EC" id="3.5.4.13"/>
    </reaction>
</comment>
<comment type="pathway">
    <text evidence="1">Pyrimidine metabolism; dUMP biosynthesis; dUMP from dCTP (dUTP route): step 1/2.</text>
</comment>
<comment type="subunit">
    <text evidence="1">Homotrimer.</text>
</comment>
<comment type="similarity">
    <text evidence="1">Belongs to the dCTP deaminase family.</text>
</comment>
<name>DCD_PSEPG</name>
<reference key="1">
    <citation type="submission" date="2008-01" db="EMBL/GenBank/DDBJ databases">
        <title>Complete sequence of Pseudomonas putida GB-1.</title>
        <authorList>
            <consortium name="US DOE Joint Genome Institute"/>
            <person name="Copeland A."/>
            <person name="Lucas S."/>
            <person name="Lapidus A."/>
            <person name="Barry K."/>
            <person name="Glavina del Rio T."/>
            <person name="Dalin E."/>
            <person name="Tice H."/>
            <person name="Pitluck S."/>
            <person name="Bruce D."/>
            <person name="Goodwin L."/>
            <person name="Chertkov O."/>
            <person name="Brettin T."/>
            <person name="Detter J.C."/>
            <person name="Han C."/>
            <person name="Kuske C.R."/>
            <person name="Schmutz J."/>
            <person name="Larimer F."/>
            <person name="Land M."/>
            <person name="Hauser L."/>
            <person name="Kyrpides N."/>
            <person name="Kim E."/>
            <person name="McCarthy J.K."/>
            <person name="Richardson P."/>
        </authorList>
    </citation>
    <scope>NUCLEOTIDE SEQUENCE [LARGE SCALE GENOMIC DNA]</scope>
    <source>
        <strain>GB-1</strain>
    </source>
</reference>
<organism>
    <name type="scientific">Pseudomonas putida (strain GB-1)</name>
    <dbReference type="NCBI Taxonomy" id="76869"/>
    <lineage>
        <taxon>Bacteria</taxon>
        <taxon>Pseudomonadati</taxon>
        <taxon>Pseudomonadota</taxon>
        <taxon>Gammaproteobacteria</taxon>
        <taxon>Pseudomonadales</taxon>
        <taxon>Pseudomonadaceae</taxon>
        <taxon>Pseudomonas</taxon>
    </lineage>
</organism>
<proteinExistence type="inferred from homology"/>
<feature type="chain" id="PRO_1000076624" description="dCTP deaminase">
    <location>
        <begin position="1"/>
        <end position="188"/>
    </location>
</feature>
<feature type="active site" description="Proton donor/acceptor" evidence="1">
    <location>
        <position position="137"/>
    </location>
</feature>
<feature type="binding site" evidence="1">
    <location>
        <begin position="111"/>
        <end position="116"/>
    </location>
    <ligand>
        <name>dCTP</name>
        <dbReference type="ChEBI" id="CHEBI:61481"/>
    </ligand>
</feature>
<feature type="binding site" evidence="1">
    <location>
        <begin position="135"/>
        <end position="137"/>
    </location>
    <ligand>
        <name>dCTP</name>
        <dbReference type="ChEBI" id="CHEBI:61481"/>
    </ligand>
</feature>
<feature type="binding site" evidence="1">
    <location>
        <position position="156"/>
    </location>
    <ligand>
        <name>dCTP</name>
        <dbReference type="ChEBI" id="CHEBI:61481"/>
    </ligand>
</feature>
<feature type="binding site" evidence="1">
    <location>
        <position position="170"/>
    </location>
    <ligand>
        <name>dCTP</name>
        <dbReference type="ChEBI" id="CHEBI:61481"/>
    </ligand>
</feature>
<feature type="binding site" evidence="1">
    <location>
        <position position="180"/>
    </location>
    <ligand>
        <name>dCTP</name>
        <dbReference type="ChEBI" id="CHEBI:61481"/>
    </ligand>
</feature>
<dbReference type="EC" id="3.5.4.13" evidence="1"/>
<dbReference type="EMBL" id="CP000926">
    <property type="protein sequence ID" value="ABZ00201.1"/>
    <property type="molecule type" value="Genomic_DNA"/>
</dbReference>
<dbReference type="RefSeq" id="WP_003258001.1">
    <property type="nucleotide sequence ID" value="NC_010322.1"/>
</dbReference>
<dbReference type="SMR" id="B0KUD5"/>
<dbReference type="GeneID" id="97169673"/>
<dbReference type="KEGG" id="ppg:PputGB1_4312"/>
<dbReference type="eggNOG" id="COG0717">
    <property type="taxonomic scope" value="Bacteria"/>
</dbReference>
<dbReference type="HOGENOM" id="CLU_087476_4_0_6"/>
<dbReference type="UniPathway" id="UPA00610">
    <property type="reaction ID" value="UER00665"/>
</dbReference>
<dbReference type="Proteomes" id="UP000002157">
    <property type="component" value="Chromosome"/>
</dbReference>
<dbReference type="GO" id="GO:0008829">
    <property type="term" value="F:dCTP deaminase activity"/>
    <property type="evidence" value="ECO:0007669"/>
    <property type="project" value="UniProtKB-UniRule"/>
</dbReference>
<dbReference type="GO" id="GO:0000166">
    <property type="term" value="F:nucleotide binding"/>
    <property type="evidence" value="ECO:0007669"/>
    <property type="project" value="UniProtKB-KW"/>
</dbReference>
<dbReference type="GO" id="GO:0006226">
    <property type="term" value="P:dUMP biosynthetic process"/>
    <property type="evidence" value="ECO:0007669"/>
    <property type="project" value="UniProtKB-UniPathway"/>
</dbReference>
<dbReference type="GO" id="GO:0006229">
    <property type="term" value="P:dUTP biosynthetic process"/>
    <property type="evidence" value="ECO:0007669"/>
    <property type="project" value="UniProtKB-UniRule"/>
</dbReference>
<dbReference type="GO" id="GO:0015949">
    <property type="term" value="P:nucleobase-containing small molecule interconversion"/>
    <property type="evidence" value="ECO:0007669"/>
    <property type="project" value="TreeGrafter"/>
</dbReference>
<dbReference type="CDD" id="cd07557">
    <property type="entry name" value="trimeric_dUTPase"/>
    <property type="match status" value="1"/>
</dbReference>
<dbReference type="FunFam" id="2.70.40.10:FF:000001">
    <property type="entry name" value="dCTP deaminase"/>
    <property type="match status" value="1"/>
</dbReference>
<dbReference type="Gene3D" id="2.70.40.10">
    <property type="match status" value="1"/>
</dbReference>
<dbReference type="HAMAP" id="MF_00146">
    <property type="entry name" value="dCTP_deaminase"/>
    <property type="match status" value="1"/>
</dbReference>
<dbReference type="InterPro" id="IPR011962">
    <property type="entry name" value="dCTP_deaminase"/>
</dbReference>
<dbReference type="InterPro" id="IPR036157">
    <property type="entry name" value="dUTPase-like_sf"/>
</dbReference>
<dbReference type="InterPro" id="IPR033704">
    <property type="entry name" value="dUTPase_trimeric"/>
</dbReference>
<dbReference type="NCBIfam" id="TIGR02274">
    <property type="entry name" value="dCTP_deam"/>
    <property type="match status" value="1"/>
</dbReference>
<dbReference type="PANTHER" id="PTHR42680">
    <property type="entry name" value="DCTP DEAMINASE"/>
    <property type="match status" value="1"/>
</dbReference>
<dbReference type="PANTHER" id="PTHR42680:SF3">
    <property type="entry name" value="DCTP DEAMINASE"/>
    <property type="match status" value="1"/>
</dbReference>
<dbReference type="Pfam" id="PF22769">
    <property type="entry name" value="DCD"/>
    <property type="match status" value="1"/>
</dbReference>
<dbReference type="SUPFAM" id="SSF51283">
    <property type="entry name" value="dUTPase-like"/>
    <property type="match status" value="1"/>
</dbReference>
<keyword id="KW-0378">Hydrolase</keyword>
<keyword id="KW-0546">Nucleotide metabolism</keyword>
<keyword id="KW-0547">Nucleotide-binding</keyword>